<gene>
    <name type="primary">sirB2</name>
    <name evidence="4" type="synonym">orf2</name>
    <name type="ordered locus">STM1774</name>
</gene>
<proteinExistence type="inferred from homology"/>
<protein>
    <recommendedName>
        <fullName>Protein SirB2</fullName>
    </recommendedName>
</protein>
<comment type="function">
    <text evidence="3">Required for maximal expression of sirC, not required to invade host cells.</text>
</comment>
<comment type="subcellular location">
    <subcellularLocation>
        <location evidence="1">Cell inner membrane</location>
        <topology evidence="2">Multi-pass membrane protein</topology>
    </subcellularLocation>
</comment>
<comment type="disruption phenotype">
    <text evidence="3">Not essential for the ability to invade cultured HeLa cells (the invasive phenotype).</text>
</comment>
<comment type="similarity">
    <text evidence="5">Belongs to the SirB2 family.</text>
</comment>
<accession>P0A237</accession>
<accession>Q9XCQ2</accession>
<sequence length="129" mass="14467">MTIAMLLTLHLICVALSVSLFVARYWWRYCGHALAAARWTRIVPPVIDTLLLLSGIGLIVKTHILPFTESGSWLTEKLFGVIIYIVLGFIALDYRQARSQQARFIAFPLALVVLYIIIKLATTKIPLLG</sequence>
<name>SIRB2_SALTY</name>
<dbReference type="EMBL" id="AF134855">
    <property type="protein sequence ID" value="AAD32201.1"/>
    <property type="molecule type" value="Genomic_DNA"/>
</dbReference>
<dbReference type="EMBL" id="AE006468">
    <property type="protein sequence ID" value="AAL20689.1"/>
    <property type="molecule type" value="Genomic_DNA"/>
</dbReference>
<dbReference type="RefSeq" id="WP_000150667.1">
    <property type="nucleotide sequence ID" value="NC_003197.2"/>
</dbReference>
<dbReference type="SMR" id="P0A237"/>
<dbReference type="STRING" id="99287.STM1774"/>
<dbReference type="PaxDb" id="99287-STM1774"/>
<dbReference type="KEGG" id="stm:STM1774"/>
<dbReference type="PATRIC" id="fig|99287.12.peg.1869"/>
<dbReference type="HOGENOM" id="CLU_123860_3_0_6"/>
<dbReference type="OMA" id="LKVFPHI"/>
<dbReference type="PhylomeDB" id="P0A237"/>
<dbReference type="BioCyc" id="SENT99287:STM1774-MONOMER"/>
<dbReference type="Proteomes" id="UP000001014">
    <property type="component" value="Chromosome"/>
</dbReference>
<dbReference type="GO" id="GO:0005886">
    <property type="term" value="C:plasma membrane"/>
    <property type="evidence" value="ECO:0000318"/>
    <property type="project" value="GO_Central"/>
</dbReference>
<dbReference type="InterPro" id="IPR007360">
    <property type="entry name" value="SirB"/>
</dbReference>
<dbReference type="NCBIfam" id="NF007622">
    <property type="entry name" value="PRK10278.1"/>
    <property type="match status" value="1"/>
</dbReference>
<dbReference type="PANTHER" id="PTHR39594">
    <property type="entry name" value="PROTEIN YCHQ"/>
    <property type="match status" value="1"/>
</dbReference>
<dbReference type="PANTHER" id="PTHR39594:SF1">
    <property type="entry name" value="PROTEIN YCHQ"/>
    <property type="match status" value="1"/>
</dbReference>
<dbReference type="Pfam" id="PF04247">
    <property type="entry name" value="SirB"/>
    <property type="match status" value="1"/>
</dbReference>
<dbReference type="PIRSF" id="PIRSF005610">
    <property type="entry name" value="SirB"/>
    <property type="match status" value="1"/>
</dbReference>
<reference key="1">
    <citation type="journal article" date="1999" name="J. Bacteriol.">
        <title>A HilA-independent pathway to Salmonella typhimurium invasion gene transcription.</title>
        <authorList>
            <person name="Rakeman J.L."/>
            <person name="Bonifield H.R."/>
            <person name="Miller S.I."/>
        </authorList>
    </citation>
    <scope>NUCLEOTIDE SEQUENCE [GENOMIC DNA]</scope>
    <scope>PUTATIVE FUNCTION</scope>
    <scope>DISRUPTION PHENOTYPE</scope>
    <source>
        <strain>ATCC 14028 / SGSG 2980 / CDC 6516-60 / NCTC 12023</strain>
    </source>
</reference>
<reference key="2">
    <citation type="journal article" date="2001" name="Nature">
        <title>Complete genome sequence of Salmonella enterica serovar Typhimurium LT2.</title>
        <authorList>
            <person name="McClelland M."/>
            <person name="Sanderson K.E."/>
            <person name="Spieth J."/>
            <person name="Clifton S.W."/>
            <person name="Latreille P."/>
            <person name="Courtney L."/>
            <person name="Porwollik S."/>
            <person name="Ali J."/>
            <person name="Dante M."/>
            <person name="Du F."/>
            <person name="Hou S."/>
            <person name="Layman D."/>
            <person name="Leonard S."/>
            <person name="Nguyen C."/>
            <person name="Scott K."/>
            <person name="Holmes A."/>
            <person name="Grewal N."/>
            <person name="Mulvaney E."/>
            <person name="Ryan E."/>
            <person name="Sun H."/>
            <person name="Florea L."/>
            <person name="Miller W."/>
            <person name="Stoneking T."/>
            <person name="Nhan M."/>
            <person name="Waterston R."/>
            <person name="Wilson R.K."/>
        </authorList>
    </citation>
    <scope>NUCLEOTIDE SEQUENCE [LARGE SCALE GENOMIC DNA]</scope>
    <source>
        <strain>LT2 / SGSC1412 / ATCC 700720</strain>
    </source>
</reference>
<feature type="chain" id="PRO_0000097772" description="Protein SirB2">
    <location>
        <begin position="1"/>
        <end position="129"/>
    </location>
</feature>
<feature type="topological domain" description="Periplasmic" evidence="2">
    <location>
        <begin position="1"/>
        <end position="2"/>
    </location>
</feature>
<feature type="transmembrane region" description="Helical" evidence="2">
    <location>
        <begin position="3"/>
        <end position="23"/>
    </location>
</feature>
<feature type="topological domain" description="Cytoplasmic" evidence="2">
    <location>
        <begin position="24"/>
        <end position="41"/>
    </location>
</feature>
<feature type="transmembrane region" description="Helical" evidence="2">
    <location>
        <begin position="42"/>
        <end position="62"/>
    </location>
</feature>
<feature type="topological domain" description="Periplasmic" evidence="2">
    <location>
        <begin position="63"/>
        <end position="71"/>
    </location>
</feature>
<feature type="transmembrane region" description="Helical" evidence="2">
    <location>
        <begin position="72"/>
        <end position="92"/>
    </location>
</feature>
<feature type="topological domain" description="Cytoplasmic" evidence="2">
    <location>
        <begin position="93"/>
        <end position="104"/>
    </location>
</feature>
<feature type="transmembrane region" description="Helical" evidence="2">
    <location>
        <begin position="105"/>
        <end position="125"/>
    </location>
</feature>
<feature type="topological domain" description="Periplasmic" evidence="2">
    <location>
        <begin position="126"/>
        <end position="129"/>
    </location>
</feature>
<organism>
    <name type="scientific">Salmonella typhimurium (strain LT2 / SGSC1412 / ATCC 700720)</name>
    <dbReference type="NCBI Taxonomy" id="99287"/>
    <lineage>
        <taxon>Bacteria</taxon>
        <taxon>Pseudomonadati</taxon>
        <taxon>Pseudomonadota</taxon>
        <taxon>Gammaproteobacteria</taxon>
        <taxon>Enterobacterales</taxon>
        <taxon>Enterobacteriaceae</taxon>
        <taxon>Salmonella</taxon>
    </lineage>
</organism>
<keyword id="KW-0997">Cell inner membrane</keyword>
<keyword id="KW-1003">Cell membrane</keyword>
<keyword id="KW-0472">Membrane</keyword>
<keyword id="KW-1185">Reference proteome</keyword>
<keyword id="KW-0812">Transmembrane</keyword>
<keyword id="KW-1133">Transmembrane helix</keyword>
<evidence type="ECO:0000250" key="1">
    <source>
        <dbReference type="UniProtKB" id="Q46755"/>
    </source>
</evidence>
<evidence type="ECO:0000255" key="2"/>
<evidence type="ECO:0000269" key="3">
    <source>
    </source>
</evidence>
<evidence type="ECO:0000303" key="4">
    <source>
    </source>
</evidence>
<evidence type="ECO:0000305" key="5"/>